<sequence>MIDTSIPLVDLHRHLDGNVRVNTIWELGHQHGIALPADSLETLAPFVQIQGKETSLVAFLKKLDWMVAVLADLDAVKRVAYENVADAALSGLDYAELRFSPYYMAMNHKLPIEGVVEAVVDGVKAGLKDYNVKINLIGILSRSFGQAACTQELEGLLAHKQHLVAMDLAGDEMGFPGELFNDHFKRVRDADLAITAHAGEAAGSQSMWQAIQELGATRIGHGVNAIHDPKLMEYLAKHRIGIESCPTSNLHTSTVASYAEHPFRTFMDAGVLINLNTDDPGVSAIDINHEYRIAKSELKLTDAELAQVQRNGVEMAFLSDSERKALYAAKV</sequence>
<feature type="chain" id="PRO_1000017695" description="Adenosine deaminase">
    <location>
        <begin position="1"/>
        <end position="331"/>
    </location>
</feature>
<feature type="active site" description="Proton donor" evidence="1">
    <location>
        <position position="200"/>
    </location>
</feature>
<feature type="binding site" evidence="1">
    <location>
        <position position="12"/>
    </location>
    <ligand>
        <name>Zn(2+)</name>
        <dbReference type="ChEBI" id="CHEBI:29105"/>
        <note>catalytic</note>
    </ligand>
</feature>
<feature type="binding site" evidence="1">
    <location>
        <position position="14"/>
    </location>
    <ligand>
        <name>substrate</name>
    </ligand>
</feature>
<feature type="binding site" evidence="1">
    <location>
        <position position="14"/>
    </location>
    <ligand>
        <name>Zn(2+)</name>
        <dbReference type="ChEBI" id="CHEBI:29105"/>
        <note>catalytic</note>
    </ligand>
</feature>
<feature type="binding site" evidence="1">
    <location>
        <position position="16"/>
    </location>
    <ligand>
        <name>substrate</name>
    </ligand>
</feature>
<feature type="binding site" evidence="1">
    <location>
        <position position="170"/>
    </location>
    <ligand>
        <name>substrate</name>
    </ligand>
</feature>
<feature type="binding site" evidence="1">
    <location>
        <position position="197"/>
    </location>
    <ligand>
        <name>Zn(2+)</name>
        <dbReference type="ChEBI" id="CHEBI:29105"/>
        <note>catalytic</note>
    </ligand>
</feature>
<feature type="binding site" evidence="1">
    <location>
        <position position="278"/>
    </location>
    <ligand>
        <name>Zn(2+)</name>
        <dbReference type="ChEBI" id="CHEBI:29105"/>
        <note>catalytic</note>
    </ligand>
</feature>
<feature type="binding site" evidence="1">
    <location>
        <position position="279"/>
    </location>
    <ligand>
        <name>substrate</name>
    </ligand>
</feature>
<feature type="site" description="Important for catalytic activity" evidence="1">
    <location>
        <position position="221"/>
    </location>
</feature>
<gene>
    <name evidence="1" type="primary">add</name>
    <name type="ordered locus">Shew185_4352</name>
</gene>
<protein>
    <recommendedName>
        <fullName evidence="1">Adenosine deaminase</fullName>
        <ecNumber evidence="1">3.5.4.4</ecNumber>
    </recommendedName>
    <alternativeName>
        <fullName evidence="1">Adenosine aminohydrolase</fullName>
    </alternativeName>
</protein>
<proteinExistence type="inferred from homology"/>
<accession>A6WUH7</accession>
<name>ADD_SHEB8</name>
<comment type="function">
    <text evidence="1">Catalyzes the hydrolytic deamination of adenosine and 2-deoxyadenosine.</text>
</comment>
<comment type="catalytic activity">
    <reaction evidence="1">
        <text>adenosine + H2O + H(+) = inosine + NH4(+)</text>
        <dbReference type="Rhea" id="RHEA:24408"/>
        <dbReference type="ChEBI" id="CHEBI:15377"/>
        <dbReference type="ChEBI" id="CHEBI:15378"/>
        <dbReference type="ChEBI" id="CHEBI:16335"/>
        <dbReference type="ChEBI" id="CHEBI:17596"/>
        <dbReference type="ChEBI" id="CHEBI:28938"/>
        <dbReference type="EC" id="3.5.4.4"/>
    </reaction>
    <physiologicalReaction direction="left-to-right" evidence="1">
        <dbReference type="Rhea" id="RHEA:24409"/>
    </physiologicalReaction>
</comment>
<comment type="catalytic activity">
    <reaction evidence="1">
        <text>2'-deoxyadenosine + H2O + H(+) = 2'-deoxyinosine + NH4(+)</text>
        <dbReference type="Rhea" id="RHEA:28190"/>
        <dbReference type="ChEBI" id="CHEBI:15377"/>
        <dbReference type="ChEBI" id="CHEBI:15378"/>
        <dbReference type="ChEBI" id="CHEBI:17256"/>
        <dbReference type="ChEBI" id="CHEBI:28938"/>
        <dbReference type="ChEBI" id="CHEBI:28997"/>
        <dbReference type="EC" id="3.5.4.4"/>
    </reaction>
    <physiologicalReaction direction="left-to-right" evidence="1">
        <dbReference type="Rhea" id="RHEA:28191"/>
    </physiologicalReaction>
</comment>
<comment type="cofactor">
    <cofactor evidence="1">
        <name>Zn(2+)</name>
        <dbReference type="ChEBI" id="CHEBI:29105"/>
    </cofactor>
    <text evidence="1">Binds 1 zinc ion per subunit.</text>
</comment>
<comment type="similarity">
    <text evidence="1">Belongs to the metallo-dependent hydrolases superfamily. Adenosine and AMP deaminases family. Adenosine deaminase subfamily.</text>
</comment>
<reference key="1">
    <citation type="submission" date="2007-07" db="EMBL/GenBank/DDBJ databases">
        <title>Complete sequence of chromosome of Shewanella baltica OS185.</title>
        <authorList>
            <consortium name="US DOE Joint Genome Institute"/>
            <person name="Copeland A."/>
            <person name="Lucas S."/>
            <person name="Lapidus A."/>
            <person name="Barry K."/>
            <person name="Glavina del Rio T."/>
            <person name="Dalin E."/>
            <person name="Tice H."/>
            <person name="Pitluck S."/>
            <person name="Sims D."/>
            <person name="Brettin T."/>
            <person name="Bruce D."/>
            <person name="Detter J.C."/>
            <person name="Han C."/>
            <person name="Schmutz J."/>
            <person name="Larimer F."/>
            <person name="Land M."/>
            <person name="Hauser L."/>
            <person name="Kyrpides N."/>
            <person name="Mikhailova N."/>
            <person name="Brettar I."/>
            <person name="Rodrigues J."/>
            <person name="Konstantinidis K."/>
            <person name="Tiedje J."/>
            <person name="Richardson P."/>
        </authorList>
    </citation>
    <scope>NUCLEOTIDE SEQUENCE [LARGE SCALE GENOMIC DNA]</scope>
    <source>
        <strain>OS185</strain>
    </source>
</reference>
<organism>
    <name type="scientific">Shewanella baltica (strain OS185)</name>
    <dbReference type="NCBI Taxonomy" id="402882"/>
    <lineage>
        <taxon>Bacteria</taxon>
        <taxon>Pseudomonadati</taxon>
        <taxon>Pseudomonadota</taxon>
        <taxon>Gammaproteobacteria</taxon>
        <taxon>Alteromonadales</taxon>
        <taxon>Shewanellaceae</taxon>
        <taxon>Shewanella</taxon>
    </lineage>
</organism>
<dbReference type="EC" id="3.5.4.4" evidence="1"/>
<dbReference type="EMBL" id="CP000753">
    <property type="protein sequence ID" value="ABS10466.1"/>
    <property type="molecule type" value="Genomic_DNA"/>
</dbReference>
<dbReference type="RefSeq" id="WP_012090664.1">
    <property type="nucleotide sequence ID" value="NC_009665.1"/>
</dbReference>
<dbReference type="SMR" id="A6WUH7"/>
<dbReference type="KEGG" id="sbm:Shew185_4352"/>
<dbReference type="HOGENOM" id="CLU_039228_0_2_6"/>
<dbReference type="GO" id="GO:0005829">
    <property type="term" value="C:cytosol"/>
    <property type="evidence" value="ECO:0007669"/>
    <property type="project" value="TreeGrafter"/>
</dbReference>
<dbReference type="GO" id="GO:0046936">
    <property type="term" value="F:2'-deoxyadenosine deaminase activity"/>
    <property type="evidence" value="ECO:0007669"/>
    <property type="project" value="RHEA"/>
</dbReference>
<dbReference type="GO" id="GO:0004000">
    <property type="term" value="F:adenosine deaminase activity"/>
    <property type="evidence" value="ECO:0007669"/>
    <property type="project" value="UniProtKB-UniRule"/>
</dbReference>
<dbReference type="GO" id="GO:0008270">
    <property type="term" value="F:zinc ion binding"/>
    <property type="evidence" value="ECO:0007669"/>
    <property type="project" value="UniProtKB-UniRule"/>
</dbReference>
<dbReference type="GO" id="GO:0006154">
    <property type="term" value="P:adenosine catabolic process"/>
    <property type="evidence" value="ECO:0007669"/>
    <property type="project" value="TreeGrafter"/>
</dbReference>
<dbReference type="GO" id="GO:0043103">
    <property type="term" value="P:hypoxanthine salvage"/>
    <property type="evidence" value="ECO:0007669"/>
    <property type="project" value="TreeGrafter"/>
</dbReference>
<dbReference type="GO" id="GO:0046103">
    <property type="term" value="P:inosine biosynthetic process"/>
    <property type="evidence" value="ECO:0007669"/>
    <property type="project" value="TreeGrafter"/>
</dbReference>
<dbReference type="GO" id="GO:0009117">
    <property type="term" value="P:nucleotide metabolic process"/>
    <property type="evidence" value="ECO:0007669"/>
    <property type="project" value="UniProtKB-KW"/>
</dbReference>
<dbReference type="GO" id="GO:0009168">
    <property type="term" value="P:purine ribonucleoside monophosphate biosynthetic process"/>
    <property type="evidence" value="ECO:0007669"/>
    <property type="project" value="UniProtKB-UniRule"/>
</dbReference>
<dbReference type="FunFam" id="3.20.20.140:FF:000009">
    <property type="entry name" value="Adenosine deaminase"/>
    <property type="match status" value="1"/>
</dbReference>
<dbReference type="Gene3D" id="3.20.20.140">
    <property type="entry name" value="Metal-dependent hydrolases"/>
    <property type="match status" value="1"/>
</dbReference>
<dbReference type="HAMAP" id="MF_00540">
    <property type="entry name" value="A_deaminase"/>
    <property type="match status" value="1"/>
</dbReference>
<dbReference type="InterPro" id="IPR028893">
    <property type="entry name" value="A_deaminase"/>
</dbReference>
<dbReference type="InterPro" id="IPR001365">
    <property type="entry name" value="A_deaminase_dom"/>
</dbReference>
<dbReference type="InterPro" id="IPR006330">
    <property type="entry name" value="Ado/ade_deaminase"/>
</dbReference>
<dbReference type="InterPro" id="IPR032466">
    <property type="entry name" value="Metal_Hydrolase"/>
</dbReference>
<dbReference type="NCBIfam" id="TIGR01430">
    <property type="entry name" value="aden_deam"/>
    <property type="match status" value="1"/>
</dbReference>
<dbReference type="NCBIfam" id="NF006846">
    <property type="entry name" value="PRK09358.1-1"/>
    <property type="match status" value="1"/>
</dbReference>
<dbReference type="PANTHER" id="PTHR11409">
    <property type="entry name" value="ADENOSINE DEAMINASE"/>
    <property type="match status" value="1"/>
</dbReference>
<dbReference type="PANTHER" id="PTHR11409:SF43">
    <property type="entry name" value="ADENOSINE DEAMINASE"/>
    <property type="match status" value="1"/>
</dbReference>
<dbReference type="Pfam" id="PF00962">
    <property type="entry name" value="A_deaminase"/>
    <property type="match status" value="1"/>
</dbReference>
<dbReference type="SUPFAM" id="SSF51556">
    <property type="entry name" value="Metallo-dependent hydrolases"/>
    <property type="match status" value="1"/>
</dbReference>
<keyword id="KW-0378">Hydrolase</keyword>
<keyword id="KW-0479">Metal-binding</keyword>
<keyword id="KW-0546">Nucleotide metabolism</keyword>
<keyword id="KW-0862">Zinc</keyword>
<evidence type="ECO:0000255" key="1">
    <source>
        <dbReference type="HAMAP-Rule" id="MF_00540"/>
    </source>
</evidence>